<keyword id="KW-0002">3D-structure</keyword>
<keyword id="KW-0227">DNA damage</keyword>
<keyword id="KW-0234">DNA repair</keyword>
<keyword id="KW-0237">DNA synthesis</keyword>
<keyword id="KW-0238">DNA-binding</keyword>
<keyword id="KW-0460">Magnesium</keyword>
<keyword id="KW-0479">Metal-binding</keyword>
<keyword id="KW-0496">Mitochondrion</keyword>
<keyword id="KW-0548">Nucleotidyltransferase</keyword>
<keyword id="KW-0539">Nucleus</keyword>
<keyword id="KW-1185">Reference proteome</keyword>
<keyword id="KW-0808">Transferase</keyword>
<organism>
    <name type="scientific">Saccharomyces cerevisiae (strain ATCC 204508 / S288c)</name>
    <name type="common">Baker's yeast</name>
    <dbReference type="NCBI Taxonomy" id="559292"/>
    <lineage>
        <taxon>Eukaryota</taxon>
        <taxon>Fungi</taxon>
        <taxon>Dikarya</taxon>
        <taxon>Ascomycota</taxon>
        <taxon>Saccharomycotina</taxon>
        <taxon>Saccharomycetes</taxon>
        <taxon>Saccharomycetales</taxon>
        <taxon>Saccharomycetaceae</taxon>
        <taxon>Saccharomyces</taxon>
    </lineage>
</organism>
<sequence length="985" mass="112227">MGEHGGLVDLLDSDLEYSINRETPDKNNCLSQQSVNDSHLTAKTGGLNARSFLSTLSDDSLIEYVNQLSQTNKNNSNPTAGTLRFTTKNISCDELHADLGGGEDSPIARSVIEIQESDSNGDDVKKNTVYTREAYFHEKAHGQTLQDQILKDQYKDQISSQSSKIFKNCVIYINGYTKPGRLQLHEMIVLHGGKFLHYLSSKKTVTHIVASNLPLKKRIEFANYKVVSPDWIVDSVKEARLLPWQNYSLTSKLDEQQKKLDNCKTVNSIPLPSETSLHKGSKCVGSALLPVEQQSPVNLNNLEAKRIVACDDPDFLTSYFAHSRLHHLSAWKANLKDKFLNENIHKYTKITDKDTYIIFHIDFDCFFATVAYLCRSSSFSACDFKRDPIVVCHGTKNSDIASCNYVARSYGIKNGMWVSQAEKMLPNGIKLISLPYTFEQFQLKSEAFYSTLKRLNIFNLILPISIDEAVCVRIIPDNIHNTNTLNARLCEEIRQEIFQGTNGCTVSIGCSDSLVLARLALKMAKPNGYNITFKSNLSEEFWSSFKLDDLPGVGHSTLSRLESTFDSPHSLNDLRKRYTLDALKASVGSKLGMKIHLALQGQDDEESLKILYDPKEVLQRKSLSIDINWGIRFKNITQVDLFIERGCQYLLEKLNEINKTTSQITLKLMRRCKDAPIEPPKYMGMGRCDSFSRSSRLGIPTNEFGIIATEMKSLYRTLGCPPMELRGLALQFNKLVDVGPDNNQLKLRLPFKTIVTNRAFEALPEDVKNDINNEFEKRNYKRKESGLTSNSLSSKKKGFAISRLEVNDLPSTMEEQFMNELPTQIRAEVRHDLRIQKKIQQTKLGNLQEKIKRREESLQNEKNHFMGQNSIFQPIKFQNLTRFKKICQLVKQWVAETLGDGGPHEKDVKLFVKYLIKLCDSNRVHLVLHLSNLISRELNLCAFLNQDHSGFQTWERILLNDIIPLLNRNKHTYQTVRKLDMDFEV</sequence>
<feature type="chain" id="PRO_0000173995" description="DNA repair protein REV1">
    <location>
        <begin position="1"/>
        <end position="985"/>
    </location>
</feature>
<feature type="domain" description="BRCT" evidence="1">
    <location>
        <begin position="161"/>
        <end position="249"/>
    </location>
</feature>
<feature type="domain" description="UmuC" evidence="2">
    <location>
        <begin position="358"/>
        <end position="554"/>
    </location>
</feature>
<feature type="region of interest" description="Interaction with target DNA">
    <location>
        <begin position="319"/>
        <end position="329"/>
    </location>
</feature>
<feature type="region of interest" description="Interaction with target DNA">
    <location>
        <begin position="395"/>
        <end position="397"/>
    </location>
</feature>
<feature type="region of interest" description="Interaction with target DNA">
    <location>
        <begin position="554"/>
        <end position="557"/>
    </location>
</feature>
<feature type="region of interest" description="Interaction with target DNA">
    <location>
        <begin position="620"/>
        <end position="628"/>
    </location>
</feature>
<feature type="binding site" evidence="5 8">
    <location>
        <position position="324"/>
    </location>
    <ligand>
        <name>dCTP</name>
        <dbReference type="ChEBI" id="CHEBI:61481"/>
    </ligand>
</feature>
<feature type="binding site" evidence="5 8">
    <location>
        <begin position="362"/>
        <end position="366"/>
    </location>
    <ligand>
        <name>dCTP</name>
        <dbReference type="ChEBI" id="CHEBI:61481"/>
    </ligand>
</feature>
<feature type="binding site" evidence="2 8">
    <location>
        <position position="362"/>
    </location>
    <ligand>
        <name>Mg(2+)</name>
        <dbReference type="ChEBI" id="CHEBI:18420"/>
        <label>1</label>
    </ligand>
</feature>
<feature type="binding site" evidence="2 8">
    <location>
        <position position="362"/>
    </location>
    <ligand>
        <name>Mg(2+)</name>
        <dbReference type="ChEBI" id="CHEBI:18420"/>
        <label>2</label>
    </ligand>
</feature>
<feature type="binding site" evidence="2 8">
    <location>
        <position position="363"/>
    </location>
    <ligand>
        <name>Mg(2+)</name>
        <dbReference type="ChEBI" id="CHEBI:18420"/>
        <label>2</label>
    </ligand>
</feature>
<feature type="binding site" evidence="5 8">
    <location>
        <begin position="402"/>
        <end position="408"/>
    </location>
    <ligand>
        <name>dCTP</name>
        <dbReference type="ChEBI" id="CHEBI:61481"/>
    </ligand>
</feature>
<feature type="binding site" evidence="5 8">
    <location>
        <position position="414"/>
    </location>
    <ligand>
        <name>dCTP</name>
        <dbReference type="ChEBI" id="CHEBI:61481"/>
    </ligand>
</feature>
<feature type="binding site" evidence="5 8">
    <location>
        <position position="467"/>
    </location>
    <ligand>
        <name>dCTP</name>
        <dbReference type="ChEBI" id="CHEBI:61481"/>
    </ligand>
</feature>
<feature type="binding site" evidence="2 8">
    <location>
        <position position="467"/>
    </location>
    <ligand>
        <name>Mg(2+)</name>
        <dbReference type="ChEBI" id="CHEBI:18420"/>
        <label>1</label>
    </ligand>
</feature>
<feature type="binding site" evidence="2 8">
    <location>
        <position position="468"/>
    </location>
    <ligand>
        <name>Mg(2+)</name>
        <dbReference type="ChEBI" id="CHEBI:18420"/>
        <label>1</label>
    </ligand>
</feature>
<feature type="site" description="Interaction with target DNA">
    <location>
        <position position="681"/>
    </location>
</feature>
<feature type="site" description="Interaction with target DNA">
    <location>
        <position position="692"/>
    </location>
</feature>
<feature type="site" description="Interaction with target DNA">
    <location>
        <position position="694"/>
    </location>
</feature>
<feature type="mutagenesis site" description="Loss of activity." evidence="9">
    <original>G</original>
    <variation>R</variation>
    <location>
        <position position="193"/>
    </location>
</feature>
<feature type="mutagenesis site" description="Loss of dCTP transferase activity." evidence="3">
    <original>DE</original>
    <variation>AA</variation>
    <location>
        <begin position="467"/>
        <end position="468"/>
    </location>
</feature>
<feature type="sequence conflict" description="In Ref. 1; AAA34967." evidence="11" ref="1">
    <original>G</original>
    <variation>S</variation>
    <location>
        <position position="646"/>
    </location>
</feature>
<feature type="sequence conflict" description="In Ref. 1; AAA34967." evidence="11" ref="1">
    <original>Q</original>
    <variation>H</variation>
    <location>
        <position position="816"/>
    </location>
</feature>
<feature type="turn" evidence="13">
    <location>
        <begin position="165"/>
        <end position="168"/>
    </location>
</feature>
<feature type="strand" evidence="13">
    <location>
        <begin position="170"/>
        <end position="173"/>
    </location>
</feature>
<feature type="helix" evidence="13">
    <location>
        <begin position="181"/>
        <end position="190"/>
    </location>
</feature>
<feature type="strand" evidence="13">
    <location>
        <begin position="194"/>
        <end position="197"/>
    </location>
</feature>
<feature type="strand" evidence="13">
    <location>
        <begin position="202"/>
        <end position="204"/>
    </location>
</feature>
<feature type="strand" evidence="13">
    <location>
        <begin position="207"/>
        <end position="209"/>
    </location>
</feature>
<feature type="helix" evidence="13">
    <location>
        <begin position="215"/>
        <end position="220"/>
    </location>
</feature>
<feature type="turn" evidence="13">
    <location>
        <begin position="221"/>
        <end position="223"/>
    </location>
</feature>
<feature type="strand" evidence="12">
    <location>
        <begin position="224"/>
        <end position="227"/>
    </location>
</feature>
<feature type="helix" evidence="13">
    <location>
        <begin position="230"/>
        <end position="238"/>
    </location>
</feature>
<feature type="helix" evidence="13">
    <location>
        <begin position="244"/>
        <end position="247"/>
    </location>
</feature>
<feature type="helix" evidence="15">
    <location>
        <begin position="315"/>
        <end position="322"/>
    </location>
</feature>
<feature type="helix" evidence="15">
    <location>
        <begin position="324"/>
        <end position="342"/>
    </location>
</feature>
<feature type="turn" evidence="15">
    <location>
        <begin position="343"/>
        <end position="345"/>
    </location>
</feature>
<feature type="strand" evidence="15">
    <location>
        <begin position="356"/>
        <end position="363"/>
    </location>
</feature>
<feature type="helix" evidence="15">
    <location>
        <begin position="366"/>
        <end position="373"/>
    </location>
</feature>
<feature type="helix" evidence="15">
    <location>
        <begin position="377"/>
        <end position="379"/>
    </location>
</feature>
<feature type="turn" evidence="15">
    <location>
        <begin position="384"/>
        <end position="386"/>
    </location>
</feature>
<feature type="strand" evidence="15">
    <location>
        <begin position="389"/>
        <end position="391"/>
    </location>
</feature>
<feature type="strand" evidence="15">
    <location>
        <begin position="395"/>
        <end position="397"/>
    </location>
</feature>
<feature type="strand" evidence="15">
    <location>
        <begin position="401"/>
        <end position="403"/>
    </location>
</feature>
<feature type="helix" evidence="15">
    <location>
        <begin position="405"/>
        <end position="408"/>
    </location>
</feature>
<feature type="turn" evidence="15">
    <location>
        <begin position="409"/>
        <end position="411"/>
    </location>
</feature>
<feature type="helix" evidence="15">
    <location>
        <begin position="418"/>
        <end position="422"/>
    </location>
</feature>
<feature type="strand" evidence="15">
    <location>
        <begin position="432"/>
        <end position="434"/>
    </location>
</feature>
<feature type="helix" evidence="15">
    <location>
        <begin position="438"/>
        <end position="454"/>
    </location>
</feature>
<feature type="strand" evidence="15">
    <location>
        <begin position="459"/>
        <end position="465"/>
    </location>
</feature>
<feature type="strand" evidence="15">
    <location>
        <begin position="468"/>
        <end position="474"/>
    </location>
</feature>
<feature type="strand" evidence="16">
    <location>
        <begin position="477"/>
        <end position="479"/>
    </location>
</feature>
<feature type="helix" evidence="15">
    <location>
        <begin position="483"/>
        <end position="500"/>
    </location>
</feature>
<feature type="strand" evidence="15">
    <location>
        <begin position="506"/>
        <end position="513"/>
    </location>
</feature>
<feature type="helix" evidence="15">
    <location>
        <begin position="514"/>
        <end position="524"/>
    </location>
</feature>
<feature type="strand" evidence="15">
    <location>
        <begin position="529"/>
        <end position="531"/>
    </location>
</feature>
<feature type="helix" evidence="15">
    <location>
        <begin position="534"/>
        <end position="536"/>
    </location>
</feature>
<feature type="helix" evidence="15">
    <location>
        <begin position="539"/>
        <end position="542"/>
    </location>
</feature>
<feature type="helix" evidence="15">
    <location>
        <begin position="547"/>
        <end position="549"/>
    </location>
</feature>
<feature type="helix" evidence="15">
    <location>
        <begin position="555"/>
        <end position="564"/>
    </location>
</feature>
<feature type="helix" evidence="15">
    <location>
        <begin position="571"/>
        <end position="577"/>
    </location>
</feature>
<feature type="helix" evidence="15">
    <location>
        <begin position="580"/>
        <end position="587"/>
    </location>
</feature>
<feature type="helix" evidence="15">
    <location>
        <begin position="589"/>
        <end position="598"/>
    </location>
</feature>
<feature type="turn" evidence="15">
    <location>
        <begin position="599"/>
        <end position="601"/>
    </location>
</feature>
<feature type="helix" evidence="15">
    <location>
        <begin position="605"/>
        <end position="612"/>
    </location>
</feature>
<feature type="helix" evidence="15">
    <location>
        <begin position="614"/>
        <end position="618"/>
    </location>
</feature>
<feature type="strand" evidence="15">
    <location>
        <begin position="623"/>
        <end position="627"/>
    </location>
</feature>
<feature type="helix" evidence="15">
    <location>
        <begin position="636"/>
        <end position="656"/>
    </location>
</feature>
<feature type="strand" evidence="15">
    <location>
        <begin position="659"/>
        <end position="671"/>
    </location>
</feature>
<feature type="strand" evidence="15">
    <location>
        <begin position="687"/>
        <end position="701"/>
    </location>
</feature>
<feature type="helix" evidence="15">
    <location>
        <begin position="704"/>
        <end position="718"/>
    </location>
</feature>
<feature type="helix" evidence="15">
    <location>
        <begin position="722"/>
        <end position="724"/>
    </location>
</feature>
<feature type="strand" evidence="15">
    <location>
        <begin position="725"/>
        <end position="737"/>
    </location>
</feature>
<feature type="strand" evidence="17">
    <location>
        <begin position="867"/>
        <end position="872"/>
    </location>
</feature>
<feature type="helix" evidence="14">
    <location>
        <begin position="883"/>
        <end position="898"/>
    </location>
</feature>
<feature type="turn" evidence="14">
    <location>
        <begin position="899"/>
        <end position="901"/>
    </location>
</feature>
<feature type="helix" evidence="14">
    <location>
        <begin position="905"/>
        <end position="919"/>
    </location>
</feature>
<feature type="turn" evidence="14">
    <location>
        <begin position="920"/>
        <end position="922"/>
    </location>
</feature>
<feature type="helix" evidence="14">
    <location>
        <begin position="924"/>
        <end position="937"/>
    </location>
</feature>
<feature type="turn" evidence="14">
    <location>
        <begin position="941"/>
        <end position="943"/>
    </location>
</feature>
<feature type="helix" evidence="14">
    <location>
        <begin position="950"/>
        <end position="961"/>
    </location>
</feature>
<feature type="helix" evidence="14">
    <location>
        <begin position="963"/>
        <end position="967"/>
    </location>
</feature>
<feature type="helix" evidence="14">
    <location>
        <begin position="974"/>
        <end position="984"/>
    </location>
</feature>
<name>REV1_YEAST</name>
<reference key="1">
    <citation type="journal article" date="1989" name="J. Bacteriol.">
        <title>The REV1 gene of Saccharomyces cerevisiae: isolation, sequence, and functional analysis.</title>
        <authorList>
            <person name="Larimer F.W."/>
            <person name="Perry J.R."/>
            <person name="Hardigree A.A."/>
        </authorList>
    </citation>
    <scope>NUCLEOTIDE SEQUENCE [GENOMIC DNA]</scope>
    <scope>MUTAGENESIS OF GLY-193</scope>
</reference>
<reference key="2">
    <citation type="journal article" date="1996" name="Yeast">
        <title>Nucleotide sequence analysis of a 40 kb segment on the right arm of yeast chromosome XV reveals 18 open reading frames including a new pyruvate kinase and three homologues to chromosome I genes.</title>
        <authorList>
            <person name="Purnelle B."/>
            <person name="Goffeau A."/>
        </authorList>
    </citation>
    <scope>NUCLEOTIDE SEQUENCE [GENOMIC DNA]</scope>
    <source>
        <strain>ATCC 90843 / S288c / FY73</strain>
    </source>
</reference>
<reference key="3">
    <citation type="journal article" date="1997" name="Nature">
        <title>The nucleotide sequence of Saccharomyces cerevisiae chromosome XV.</title>
        <authorList>
            <person name="Dujon B."/>
            <person name="Albermann K."/>
            <person name="Aldea M."/>
            <person name="Alexandraki D."/>
            <person name="Ansorge W."/>
            <person name="Arino J."/>
            <person name="Benes V."/>
            <person name="Bohn C."/>
            <person name="Bolotin-Fukuhara M."/>
            <person name="Bordonne R."/>
            <person name="Boyer J."/>
            <person name="Camasses A."/>
            <person name="Casamayor A."/>
            <person name="Casas C."/>
            <person name="Cheret G."/>
            <person name="Cziepluch C."/>
            <person name="Daignan-Fornier B."/>
            <person name="Dang V.-D."/>
            <person name="de Haan M."/>
            <person name="Delius H."/>
            <person name="Durand P."/>
            <person name="Fairhead C."/>
            <person name="Feldmann H."/>
            <person name="Gaillon L."/>
            <person name="Galisson F."/>
            <person name="Gamo F.-J."/>
            <person name="Gancedo C."/>
            <person name="Goffeau A."/>
            <person name="Goulding S.E."/>
            <person name="Grivell L.A."/>
            <person name="Habbig B."/>
            <person name="Hand N.J."/>
            <person name="Hani J."/>
            <person name="Hattenhorst U."/>
            <person name="Hebling U."/>
            <person name="Hernando Y."/>
            <person name="Herrero E."/>
            <person name="Heumann K."/>
            <person name="Hiesel R."/>
            <person name="Hilger F."/>
            <person name="Hofmann B."/>
            <person name="Hollenberg C.P."/>
            <person name="Hughes B."/>
            <person name="Jauniaux J.-C."/>
            <person name="Kalogeropoulos A."/>
            <person name="Katsoulou C."/>
            <person name="Kordes E."/>
            <person name="Lafuente M.J."/>
            <person name="Landt O."/>
            <person name="Louis E.J."/>
            <person name="Maarse A.C."/>
            <person name="Madania A."/>
            <person name="Mannhaupt G."/>
            <person name="Marck C."/>
            <person name="Martin R.P."/>
            <person name="Mewes H.-W."/>
            <person name="Michaux G."/>
            <person name="Paces V."/>
            <person name="Parle-McDermott A.G."/>
            <person name="Pearson B.M."/>
            <person name="Perrin A."/>
            <person name="Pettersson B."/>
            <person name="Poch O."/>
            <person name="Pohl T.M."/>
            <person name="Poirey R."/>
            <person name="Portetelle D."/>
            <person name="Pujol A."/>
            <person name="Purnelle B."/>
            <person name="Ramezani Rad M."/>
            <person name="Rechmann S."/>
            <person name="Schwager C."/>
            <person name="Schweizer M."/>
            <person name="Sor F."/>
            <person name="Sterky F."/>
            <person name="Tarassov I.A."/>
            <person name="Teodoru C."/>
            <person name="Tettelin H."/>
            <person name="Thierry A."/>
            <person name="Tobiasch E."/>
            <person name="Tzermia M."/>
            <person name="Uhlen M."/>
            <person name="Unseld M."/>
            <person name="Valens M."/>
            <person name="Vandenbol M."/>
            <person name="Vetter I."/>
            <person name="Vlcek C."/>
            <person name="Voet M."/>
            <person name="Volckaert G."/>
            <person name="Voss H."/>
            <person name="Wambutt R."/>
            <person name="Wedler H."/>
            <person name="Wiemann S."/>
            <person name="Winsor B."/>
            <person name="Wolfe K.H."/>
            <person name="Zollner A."/>
            <person name="Zumstein E."/>
            <person name="Kleine K."/>
        </authorList>
    </citation>
    <scope>NUCLEOTIDE SEQUENCE [LARGE SCALE GENOMIC DNA]</scope>
    <source>
        <strain>ATCC 204508 / S288c</strain>
    </source>
</reference>
<reference key="4">
    <citation type="journal article" date="2014" name="G3 (Bethesda)">
        <title>The reference genome sequence of Saccharomyces cerevisiae: Then and now.</title>
        <authorList>
            <person name="Engel S.R."/>
            <person name="Dietrich F.S."/>
            <person name="Fisk D.G."/>
            <person name="Binkley G."/>
            <person name="Balakrishnan R."/>
            <person name="Costanzo M.C."/>
            <person name="Dwight S.S."/>
            <person name="Hitz B.C."/>
            <person name="Karra K."/>
            <person name="Nash R.S."/>
            <person name="Weng S."/>
            <person name="Wong E.D."/>
            <person name="Lloyd P."/>
            <person name="Skrzypek M.S."/>
            <person name="Miyasato S.R."/>
            <person name="Simison M."/>
            <person name="Cherry J.M."/>
        </authorList>
    </citation>
    <scope>GENOME REANNOTATION</scope>
    <source>
        <strain>ATCC 204508 / S288c</strain>
    </source>
</reference>
<reference key="5">
    <citation type="journal article" date="1996" name="Nature">
        <title>Deoxycytidyl transferase activity of yeast REV1 protein.</title>
        <authorList>
            <person name="Nelson J.R."/>
            <person name="Lawrence C.W."/>
            <person name="Hinkle D.C."/>
        </authorList>
    </citation>
    <scope>FUNCTION</scope>
</reference>
<reference key="6">
    <citation type="journal article" date="2001" name="Genes Dev.">
        <title>Roles of yeast DNA polymerases delta and zeta and of Rev1 in the bypass of abasic sites.</title>
        <authorList>
            <person name="Haracska L."/>
            <person name="Unk I."/>
            <person name="Johnson R.E."/>
            <person name="Johansson E."/>
            <person name="Burgers P.M.J."/>
            <person name="Prakash S."/>
            <person name="Prakash L."/>
        </authorList>
    </citation>
    <scope>FUNCTION</scope>
    <scope>MUTAGENESIS OF 467-ASP-GLU-468</scope>
</reference>
<reference key="7">
    <citation type="journal article" date="2003" name="Nature">
        <title>Global analysis of protein localization in budding yeast.</title>
        <authorList>
            <person name="Huh W.-K."/>
            <person name="Falvo J.V."/>
            <person name="Gerke L.C."/>
            <person name="Carroll A.S."/>
            <person name="Howson R.W."/>
            <person name="Weissman J.S."/>
            <person name="O'Shea E.K."/>
        </authorList>
    </citation>
    <scope>SUBCELLULAR LOCATION [LARGE SCALE ANALYSIS]</scope>
</reference>
<reference key="8">
    <citation type="journal article" date="2003" name="Nature">
        <title>Global analysis of protein expression in yeast.</title>
        <authorList>
            <person name="Ghaemmaghami S."/>
            <person name="Huh W.-K."/>
            <person name="Bower K."/>
            <person name="Howson R.W."/>
            <person name="Belle A."/>
            <person name="Dephoure N."/>
            <person name="O'Shea E.K."/>
            <person name="Weissman J.S."/>
        </authorList>
    </citation>
    <scope>LEVEL OF PROTEIN EXPRESSION [LARGE SCALE ANALYSIS]</scope>
</reference>
<reference key="9">
    <citation type="journal article" date="2006" name="Genetics">
        <title>Saccharomyces cerevisiae polymerase zeta functions in mitochondria.</title>
        <authorList>
            <person name="Zhang H."/>
            <person name="Chatterjee A."/>
            <person name="Singh K.K."/>
        </authorList>
    </citation>
    <scope>FUNCTION</scope>
    <scope>SUBCELLULAR LOCATION</scope>
</reference>
<reference key="10">
    <citation type="journal article" date="2008" name="DNA Repair">
        <title>Comparative analysis of in vivo interactions between Rev1 protein and other Y-family DNA polymerases in animals and yeasts.</title>
        <authorList>
            <person name="Kosarek J.N."/>
            <person name="Woodruff R.V."/>
            <person name="Rivera-Begeman A."/>
            <person name="Guo C."/>
            <person name="D'Souza S."/>
            <person name="Koonin E.V."/>
            <person name="Walker G.C."/>
            <person name="Friedberg E.C."/>
        </authorList>
    </citation>
    <scope>INTERACTION WITH REV7</scope>
</reference>
<reference key="11">
    <citation type="journal article" date="2005" name="Science">
        <title>Rev1 employs a novel mechanism of DNA synthesis using a protein template.</title>
        <authorList>
            <person name="Nair D.T."/>
            <person name="Johnson R.E."/>
            <person name="Prakash L."/>
            <person name="Prakash S."/>
            <person name="Aggarwal A.K."/>
        </authorList>
    </citation>
    <scope>X-RAY CRYSTALLOGRAPHY (2.32 ANGSTROMS) OF 305-738 IN COMPLEX WITH MAGNESIUM IONS; DNA AND DCTP</scope>
    <scope>COFACTOR</scope>
</reference>
<reference key="12">
    <citation type="journal article" date="2008" name="Structure">
        <title>Protein-template-directed synthesis across an acrolein-derived DNA adduct by yeast Rev1 DNA polymerase.</title>
        <authorList>
            <person name="Nair D.T."/>
            <person name="Johnson R.E."/>
            <person name="Prakash L."/>
            <person name="Prakash S."/>
            <person name="Aggarwal A.K."/>
        </authorList>
    </citation>
    <scope>X-RAY CRYSTALLOGRAPHY (2.41 ANGSTROMS) OF 305-738 IN COMPLEX WITH MAGNESIUM; DCTP AND TARGET DNA</scope>
    <scope>COFACTOR</scope>
</reference>
<comment type="function">
    <text evidence="3 6 10">Deoxycytidyl transferase involved in DNA repair. Transfers a dCMP residue from dCTP to the 3'-end of a DNA primer in a template-dependent reaction. May assist in the first step in the bypass of abasic lesions by the insertion of a nucleotide opposite the lesion. Required for normal induction of mutations by physical and chemical agents. Involved in mitochondrial DNA mutagenesis.</text>
</comment>
<comment type="cofactor">
    <cofactor evidence="5 8">
        <name>Mg(2+)</name>
        <dbReference type="ChEBI" id="CHEBI:18420"/>
    </cofactor>
    <text evidence="5 8">Binds 2 magnesium ions.</text>
</comment>
<comment type="subunit">
    <text evidence="7">Interacts with REV7.</text>
</comment>
<comment type="interaction">
    <interactant intactId="EBI-14951">
        <id>P12689</id>
    </interactant>
    <interactant intactId="EBI-6084">
        <id>P47110</id>
        <label>POL32</label>
    </interactant>
    <organismsDiffer>false</organismsDiffer>
    <experiments>4</experiments>
</comment>
<comment type="interaction">
    <interactant intactId="EBI-14951">
        <id>P12689</id>
    </interactant>
    <interactant intactId="EBI-14960">
        <id>P38927</id>
        <label>REV7</label>
    </interactant>
    <organismsDiffer>false</organismsDiffer>
    <experiments>3</experiments>
</comment>
<comment type="subcellular location">
    <subcellularLocation>
        <location>Nucleus</location>
    </subcellularLocation>
    <subcellularLocation>
        <location>Mitochondrion</location>
    </subcellularLocation>
</comment>
<comment type="miscellaneous">
    <text evidence="4">Present with 521 molecules/cell in log phase SD medium.</text>
</comment>
<comment type="similarity">
    <text evidence="11">Belongs to the DNA polymerase type-Y family.</text>
</comment>
<proteinExistence type="evidence at protein level"/>
<evidence type="ECO:0000255" key="1">
    <source>
        <dbReference type="PROSITE-ProRule" id="PRU00033"/>
    </source>
</evidence>
<evidence type="ECO:0000255" key="2">
    <source>
        <dbReference type="PROSITE-ProRule" id="PRU00216"/>
    </source>
</evidence>
<evidence type="ECO:0000269" key="3">
    <source>
    </source>
</evidence>
<evidence type="ECO:0000269" key="4">
    <source>
    </source>
</evidence>
<evidence type="ECO:0000269" key="5">
    <source>
    </source>
</evidence>
<evidence type="ECO:0000269" key="6">
    <source>
    </source>
</evidence>
<evidence type="ECO:0000269" key="7">
    <source>
    </source>
</evidence>
<evidence type="ECO:0000269" key="8">
    <source>
    </source>
</evidence>
<evidence type="ECO:0000269" key="9">
    <source>
    </source>
</evidence>
<evidence type="ECO:0000269" key="10">
    <source>
    </source>
</evidence>
<evidence type="ECO:0000305" key="11"/>
<evidence type="ECO:0007829" key="12">
    <source>
        <dbReference type="PDB" id="2M2I"/>
    </source>
</evidence>
<evidence type="ECO:0007829" key="13">
    <source>
        <dbReference type="PDB" id="5UMV"/>
    </source>
</evidence>
<evidence type="ECO:0007829" key="14">
    <source>
        <dbReference type="PDB" id="5YRQ"/>
    </source>
</evidence>
<evidence type="ECO:0007829" key="15">
    <source>
        <dbReference type="PDB" id="6X6Z"/>
    </source>
</evidence>
<evidence type="ECO:0007829" key="16">
    <source>
        <dbReference type="PDB" id="7T1A"/>
    </source>
</evidence>
<evidence type="ECO:0007829" key="17">
    <source>
        <dbReference type="PDB" id="8TLT"/>
    </source>
</evidence>
<gene>
    <name type="primary">REV1</name>
    <name type="ordered locus">YOR346W</name>
    <name type="ORF">O6339</name>
</gene>
<accession>P12689</accession>
<accession>D6W341</accession>
<accession>Q12323</accession>
<protein>
    <recommendedName>
        <fullName>DNA repair protein REV1</fullName>
        <ecNumber>2.7.7.-</ecNumber>
    </recommendedName>
    <alternativeName>
        <fullName>Reversionless protein 1</fullName>
    </alternativeName>
</protein>
<dbReference type="EC" id="2.7.7.-"/>
<dbReference type="EMBL" id="M22222">
    <property type="protein sequence ID" value="AAA34967.1"/>
    <property type="molecule type" value="Genomic_DNA"/>
</dbReference>
<dbReference type="EMBL" id="X95720">
    <property type="protein sequence ID" value="CAA65033.1"/>
    <property type="molecule type" value="Genomic_DNA"/>
</dbReference>
<dbReference type="EMBL" id="Z75253">
    <property type="protein sequence ID" value="CAA99674.1"/>
    <property type="molecule type" value="Genomic_DNA"/>
</dbReference>
<dbReference type="EMBL" id="BK006948">
    <property type="protein sequence ID" value="DAA11107.1"/>
    <property type="molecule type" value="Genomic_DNA"/>
</dbReference>
<dbReference type="PIR" id="S67255">
    <property type="entry name" value="S67255"/>
</dbReference>
<dbReference type="RefSeq" id="NP_014991.1">
    <property type="nucleotide sequence ID" value="NM_001183766.1"/>
</dbReference>
<dbReference type="PDB" id="2AQ4">
    <property type="method" value="X-ray"/>
    <property type="resolution" value="2.32 A"/>
    <property type="chains" value="A=305-738"/>
</dbReference>
<dbReference type="PDB" id="2M2I">
    <property type="method" value="NMR"/>
    <property type="chains" value="A=158-251"/>
</dbReference>
<dbReference type="PDB" id="3BJY">
    <property type="method" value="X-ray"/>
    <property type="resolution" value="2.41 A"/>
    <property type="chains" value="A=305-738"/>
</dbReference>
<dbReference type="PDB" id="3OSP">
    <property type="method" value="X-ray"/>
    <property type="resolution" value="2.50 A"/>
    <property type="chains" value="A=305-738"/>
</dbReference>
<dbReference type="PDB" id="4ID3">
    <property type="method" value="X-ray"/>
    <property type="resolution" value="1.97 A"/>
    <property type="chains" value="A/B=159-250"/>
</dbReference>
<dbReference type="PDB" id="5UMV">
    <property type="method" value="X-ray"/>
    <property type="resolution" value="1.75 A"/>
    <property type="chains" value="A=162-251"/>
</dbReference>
<dbReference type="PDB" id="5VX7">
    <property type="method" value="NMR"/>
    <property type="chains" value="A=162-251"/>
</dbReference>
<dbReference type="PDB" id="5WM1">
    <property type="method" value="X-ray"/>
    <property type="resolution" value="1.85 A"/>
    <property type="chains" value="A=305-738"/>
</dbReference>
<dbReference type="PDB" id="5WM8">
    <property type="method" value="X-ray"/>
    <property type="resolution" value="1.92 A"/>
    <property type="chains" value="A=305-738"/>
</dbReference>
<dbReference type="PDB" id="5WMB">
    <property type="method" value="X-ray"/>
    <property type="resolution" value="2.25 A"/>
    <property type="chains" value="A=305-738"/>
</dbReference>
<dbReference type="PDB" id="5YRQ">
    <property type="method" value="X-ray"/>
    <property type="resolution" value="2.00 A"/>
    <property type="chains" value="A/B/D/E=876-985"/>
</dbReference>
<dbReference type="PDB" id="6X6Z">
    <property type="method" value="X-ray"/>
    <property type="resolution" value="1.40 A"/>
    <property type="chains" value="A=305-746"/>
</dbReference>
<dbReference type="PDB" id="6X70">
    <property type="method" value="X-ray"/>
    <property type="resolution" value="2.05 A"/>
    <property type="chains" value="A=305-746"/>
</dbReference>
<dbReference type="PDB" id="6X71">
    <property type="method" value="X-ray"/>
    <property type="resolution" value="1.78 A"/>
    <property type="chains" value="A=305-746"/>
</dbReference>
<dbReference type="PDB" id="6X72">
    <property type="method" value="X-ray"/>
    <property type="resolution" value="2.19 A"/>
    <property type="chains" value="A=305-746"/>
</dbReference>
<dbReference type="PDB" id="6X73">
    <property type="method" value="X-ray"/>
    <property type="resolution" value="2.05 A"/>
    <property type="chains" value="A=305-746"/>
</dbReference>
<dbReference type="PDB" id="6X74">
    <property type="method" value="X-ray"/>
    <property type="resolution" value="1.69 A"/>
    <property type="chains" value="A=305-746"/>
</dbReference>
<dbReference type="PDB" id="6X75">
    <property type="method" value="X-ray"/>
    <property type="resolution" value="1.95 A"/>
    <property type="chains" value="A=305-746"/>
</dbReference>
<dbReference type="PDB" id="6X76">
    <property type="method" value="X-ray"/>
    <property type="resolution" value="2.53 A"/>
    <property type="chains" value="A=305-746"/>
</dbReference>
<dbReference type="PDB" id="6X77">
    <property type="method" value="X-ray"/>
    <property type="resolution" value="1.64 A"/>
    <property type="chains" value="A=305-746"/>
</dbReference>
<dbReference type="PDB" id="7T18">
    <property type="method" value="X-ray"/>
    <property type="resolution" value="1.70 A"/>
    <property type="chains" value="A=296-746"/>
</dbReference>
<dbReference type="PDB" id="7T19">
    <property type="method" value="X-ray"/>
    <property type="resolution" value="2.01 A"/>
    <property type="chains" value="A=296-746"/>
</dbReference>
<dbReference type="PDB" id="7T1A">
    <property type="method" value="X-ray"/>
    <property type="resolution" value="1.81 A"/>
    <property type="chains" value="A=296-746"/>
</dbReference>
<dbReference type="PDB" id="7T1B">
    <property type="method" value="X-ray"/>
    <property type="resolution" value="1.75 A"/>
    <property type="chains" value="A=296-746"/>
</dbReference>
<dbReference type="PDB" id="8TLQ">
    <property type="method" value="EM"/>
    <property type="resolution" value="3.53 A"/>
    <property type="chains" value="B=1-985"/>
</dbReference>
<dbReference type="PDB" id="8TLT">
    <property type="method" value="EM"/>
    <property type="resolution" value="2.85 A"/>
    <property type="chains" value="B=1-985"/>
</dbReference>
<dbReference type="PDBsum" id="2AQ4"/>
<dbReference type="PDBsum" id="2M2I"/>
<dbReference type="PDBsum" id="3BJY"/>
<dbReference type="PDBsum" id="3OSP"/>
<dbReference type="PDBsum" id="4ID3"/>
<dbReference type="PDBsum" id="5UMV"/>
<dbReference type="PDBsum" id="5VX7"/>
<dbReference type="PDBsum" id="5WM1"/>
<dbReference type="PDBsum" id="5WM8"/>
<dbReference type="PDBsum" id="5WMB"/>
<dbReference type="PDBsum" id="5YRQ"/>
<dbReference type="PDBsum" id="6X6Z"/>
<dbReference type="PDBsum" id="6X70"/>
<dbReference type="PDBsum" id="6X71"/>
<dbReference type="PDBsum" id="6X72"/>
<dbReference type="PDBsum" id="6X73"/>
<dbReference type="PDBsum" id="6X74"/>
<dbReference type="PDBsum" id="6X75"/>
<dbReference type="PDBsum" id="6X76"/>
<dbReference type="PDBsum" id="6X77"/>
<dbReference type="PDBsum" id="7T18"/>
<dbReference type="PDBsum" id="7T19"/>
<dbReference type="PDBsum" id="7T1A"/>
<dbReference type="PDBsum" id="7T1B"/>
<dbReference type="PDBsum" id="8TLQ"/>
<dbReference type="PDBsum" id="8TLT"/>
<dbReference type="BMRB" id="P12689"/>
<dbReference type="EMDB" id="EMD-41371"/>
<dbReference type="EMDB" id="EMD-41372"/>
<dbReference type="SMR" id="P12689"/>
<dbReference type="BioGRID" id="34731">
    <property type="interactions" value="131"/>
</dbReference>
<dbReference type="DIP" id="DIP-1000N"/>
<dbReference type="FunCoup" id="P12689">
    <property type="interactions" value="1028"/>
</dbReference>
<dbReference type="IntAct" id="P12689">
    <property type="interactions" value="7"/>
</dbReference>
<dbReference type="MINT" id="P12689"/>
<dbReference type="STRING" id="4932.YOR346W"/>
<dbReference type="iPTMnet" id="P12689"/>
<dbReference type="PaxDb" id="4932-YOR346W"/>
<dbReference type="PeptideAtlas" id="P12689"/>
<dbReference type="EnsemblFungi" id="YOR346W_mRNA">
    <property type="protein sequence ID" value="YOR346W"/>
    <property type="gene ID" value="YOR346W"/>
</dbReference>
<dbReference type="GeneID" id="854527"/>
<dbReference type="KEGG" id="sce:YOR346W"/>
<dbReference type="AGR" id="SGD:S000005873"/>
<dbReference type="SGD" id="S000005873">
    <property type="gene designation" value="REV1"/>
</dbReference>
<dbReference type="VEuPathDB" id="FungiDB:YOR346W"/>
<dbReference type="eggNOG" id="KOG2093">
    <property type="taxonomic scope" value="Eukaryota"/>
</dbReference>
<dbReference type="GeneTree" id="ENSGT00940000156374"/>
<dbReference type="HOGENOM" id="CLU_003901_1_0_1"/>
<dbReference type="InParanoid" id="P12689"/>
<dbReference type="OMA" id="PPKYMGM"/>
<dbReference type="OrthoDB" id="427711at2759"/>
<dbReference type="BioCyc" id="YEAST:G3O-33819-MONOMER"/>
<dbReference type="Reactome" id="R-SCE-110312">
    <property type="pathway name" value="Translesion synthesis by REV1"/>
</dbReference>
<dbReference type="Reactome" id="R-SCE-5655862">
    <property type="pathway name" value="Translesion synthesis by POLK"/>
</dbReference>
<dbReference type="Reactome" id="R-SCE-5656121">
    <property type="pathway name" value="Translesion synthesis by POLI"/>
</dbReference>
<dbReference type="Reactome" id="R-SCE-5656169">
    <property type="pathway name" value="Termination of translesion DNA synthesis"/>
</dbReference>
<dbReference type="BioGRID-ORCS" id="854527">
    <property type="hits" value="0 hits in 10 CRISPR screens"/>
</dbReference>
<dbReference type="EvolutionaryTrace" id="P12689"/>
<dbReference type="PRO" id="PR:P12689"/>
<dbReference type="Proteomes" id="UP000002311">
    <property type="component" value="Chromosome XV"/>
</dbReference>
<dbReference type="RNAct" id="P12689">
    <property type="molecule type" value="protein"/>
</dbReference>
<dbReference type="GO" id="GO:0000785">
    <property type="term" value="C:chromatin"/>
    <property type="evidence" value="ECO:0000314"/>
    <property type="project" value="SGD"/>
</dbReference>
<dbReference type="GO" id="GO:0005737">
    <property type="term" value="C:cytoplasm"/>
    <property type="evidence" value="ECO:0007005"/>
    <property type="project" value="SGD"/>
</dbReference>
<dbReference type="GO" id="GO:0005739">
    <property type="term" value="C:mitochondrion"/>
    <property type="evidence" value="ECO:0000314"/>
    <property type="project" value="SGD"/>
</dbReference>
<dbReference type="GO" id="GO:0005634">
    <property type="term" value="C:nucleus"/>
    <property type="evidence" value="ECO:0007005"/>
    <property type="project" value="SGD"/>
</dbReference>
<dbReference type="GO" id="GO:0005657">
    <property type="term" value="C:replication fork"/>
    <property type="evidence" value="ECO:0000353"/>
    <property type="project" value="SGD"/>
</dbReference>
<dbReference type="GO" id="GO:0003684">
    <property type="term" value="F:damaged DNA binding"/>
    <property type="evidence" value="ECO:0007669"/>
    <property type="project" value="InterPro"/>
</dbReference>
<dbReference type="GO" id="GO:0017125">
    <property type="term" value="F:deoxycytidyl transferase activity"/>
    <property type="evidence" value="ECO:0000314"/>
    <property type="project" value="SGD"/>
</dbReference>
<dbReference type="GO" id="GO:0003887">
    <property type="term" value="F:DNA-directed DNA polymerase activity"/>
    <property type="evidence" value="ECO:0000314"/>
    <property type="project" value="SGD"/>
</dbReference>
<dbReference type="GO" id="GO:0046872">
    <property type="term" value="F:metal ion binding"/>
    <property type="evidence" value="ECO:0007669"/>
    <property type="project" value="UniProtKB-KW"/>
</dbReference>
<dbReference type="GO" id="GO:0070987">
    <property type="term" value="P:error-free translesion synthesis"/>
    <property type="evidence" value="ECO:0000314"/>
    <property type="project" value="SGD"/>
</dbReference>
<dbReference type="GO" id="GO:0042276">
    <property type="term" value="P:error-prone translesion synthesis"/>
    <property type="evidence" value="ECO:0000314"/>
    <property type="project" value="SGD"/>
</dbReference>
<dbReference type="CDD" id="cd17719">
    <property type="entry name" value="BRCT_Rev1"/>
    <property type="match status" value="1"/>
</dbReference>
<dbReference type="CDD" id="cd01701">
    <property type="entry name" value="PolY_Rev1"/>
    <property type="match status" value="1"/>
</dbReference>
<dbReference type="CDD" id="cd12145">
    <property type="entry name" value="Rev1_C"/>
    <property type="match status" value="1"/>
</dbReference>
<dbReference type="FunFam" id="3.30.1490.100:FF:000001">
    <property type="entry name" value="DNA repair protein REV1"/>
    <property type="match status" value="1"/>
</dbReference>
<dbReference type="FunFam" id="3.30.70.270:FF:000091">
    <property type="entry name" value="DNA repair protein REV1"/>
    <property type="match status" value="1"/>
</dbReference>
<dbReference type="FunFam" id="3.40.1170.60:FF:000023">
    <property type="entry name" value="DNA repair protein REV1"/>
    <property type="match status" value="1"/>
</dbReference>
<dbReference type="FunFam" id="3.40.50.10190:FF:000011">
    <property type="entry name" value="DNA repair protein REV1"/>
    <property type="match status" value="1"/>
</dbReference>
<dbReference type="Gene3D" id="3.30.70.270">
    <property type="match status" value="1"/>
</dbReference>
<dbReference type="Gene3D" id="3.40.1170.60">
    <property type="match status" value="1"/>
</dbReference>
<dbReference type="Gene3D" id="6.10.250.1490">
    <property type="match status" value="1"/>
</dbReference>
<dbReference type="Gene3D" id="1.10.150.20">
    <property type="entry name" value="5' to 3' exonuclease, C-terminal subdomain"/>
    <property type="match status" value="1"/>
</dbReference>
<dbReference type="Gene3D" id="3.40.50.10190">
    <property type="entry name" value="BRCT domain"/>
    <property type="match status" value="1"/>
</dbReference>
<dbReference type="Gene3D" id="3.30.1490.100">
    <property type="entry name" value="DNA polymerase, Y-family, little finger domain"/>
    <property type="match status" value="1"/>
</dbReference>
<dbReference type="InterPro" id="IPR001357">
    <property type="entry name" value="BRCT_dom"/>
</dbReference>
<dbReference type="InterPro" id="IPR036420">
    <property type="entry name" value="BRCT_dom_sf"/>
</dbReference>
<dbReference type="InterPro" id="IPR043502">
    <property type="entry name" value="DNA/RNA_pol_sf"/>
</dbReference>
<dbReference type="InterPro" id="IPR036775">
    <property type="entry name" value="DNA_pol_Y-fam_lit_finger_sf"/>
</dbReference>
<dbReference type="InterPro" id="IPR017961">
    <property type="entry name" value="DNA_pol_Y-fam_little_finger"/>
</dbReference>
<dbReference type="InterPro" id="IPR053848">
    <property type="entry name" value="IMS_HHH_1"/>
</dbReference>
<dbReference type="InterPro" id="IPR012112">
    <property type="entry name" value="REV1"/>
</dbReference>
<dbReference type="InterPro" id="IPR043128">
    <property type="entry name" value="Rev_trsase/Diguanyl_cyclase"/>
</dbReference>
<dbReference type="InterPro" id="IPR001126">
    <property type="entry name" value="UmuC"/>
</dbReference>
<dbReference type="PANTHER" id="PTHR45990">
    <property type="entry name" value="DNA REPAIR PROTEIN REV1"/>
    <property type="match status" value="1"/>
</dbReference>
<dbReference type="PANTHER" id="PTHR45990:SF1">
    <property type="entry name" value="DNA REPAIR PROTEIN REV1"/>
    <property type="match status" value="1"/>
</dbReference>
<dbReference type="Pfam" id="PF16589">
    <property type="entry name" value="BRCT_2"/>
    <property type="match status" value="1"/>
</dbReference>
<dbReference type="Pfam" id="PF00817">
    <property type="entry name" value="IMS"/>
    <property type="match status" value="1"/>
</dbReference>
<dbReference type="Pfam" id="PF11799">
    <property type="entry name" value="IMS_C"/>
    <property type="match status" value="1"/>
</dbReference>
<dbReference type="Pfam" id="PF21999">
    <property type="entry name" value="IMS_HHH_1"/>
    <property type="match status" value="1"/>
</dbReference>
<dbReference type="PIRSF" id="PIRSF036573">
    <property type="entry name" value="REV1"/>
    <property type="match status" value="1"/>
</dbReference>
<dbReference type="SMART" id="SM00292">
    <property type="entry name" value="BRCT"/>
    <property type="match status" value="1"/>
</dbReference>
<dbReference type="SUPFAM" id="SSF52113">
    <property type="entry name" value="BRCT domain"/>
    <property type="match status" value="1"/>
</dbReference>
<dbReference type="SUPFAM" id="SSF56672">
    <property type="entry name" value="DNA/RNA polymerases"/>
    <property type="match status" value="1"/>
</dbReference>
<dbReference type="SUPFAM" id="SSF100879">
    <property type="entry name" value="Lesion bypass DNA polymerase (Y-family), little finger domain"/>
    <property type="match status" value="1"/>
</dbReference>
<dbReference type="PROSITE" id="PS50172">
    <property type="entry name" value="BRCT"/>
    <property type="match status" value="1"/>
</dbReference>
<dbReference type="PROSITE" id="PS50173">
    <property type="entry name" value="UMUC"/>
    <property type="match status" value="1"/>
</dbReference>